<accession>Q3K6T1</accession>
<protein>
    <recommendedName>
        <fullName evidence="1">Ketol-acid reductoisomerase (NADP(+))</fullName>
        <shortName evidence="1">KARI</shortName>
        <ecNumber evidence="1">1.1.1.86</ecNumber>
    </recommendedName>
    <alternativeName>
        <fullName evidence="1">Acetohydroxy-acid isomeroreductase</fullName>
        <shortName evidence="1">AHIR</shortName>
    </alternativeName>
    <alternativeName>
        <fullName evidence="1">Alpha-keto-beta-hydroxylacyl reductoisomerase</fullName>
    </alternativeName>
    <alternativeName>
        <fullName evidence="1">Ketol-acid reductoisomerase type 1</fullName>
    </alternativeName>
    <alternativeName>
        <fullName evidence="1">Ketol-acid reductoisomerase type I</fullName>
    </alternativeName>
</protein>
<proteinExistence type="inferred from homology"/>
<organism>
    <name type="scientific">Pseudomonas fluorescens (strain Pf0-1)</name>
    <dbReference type="NCBI Taxonomy" id="205922"/>
    <lineage>
        <taxon>Bacteria</taxon>
        <taxon>Pseudomonadati</taxon>
        <taxon>Pseudomonadota</taxon>
        <taxon>Gammaproteobacteria</taxon>
        <taxon>Pseudomonadales</taxon>
        <taxon>Pseudomonadaceae</taxon>
        <taxon>Pseudomonas</taxon>
    </lineage>
</organism>
<feature type="chain" id="PRO_0000226191" description="Ketol-acid reductoisomerase (NADP(+))">
    <location>
        <begin position="1"/>
        <end position="338"/>
    </location>
</feature>
<feature type="domain" description="KARI N-terminal Rossmann" evidence="2">
    <location>
        <begin position="1"/>
        <end position="181"/>
    </location>
</feature>
<feature type="domain" description="KARI C-terminal knotted" evidence="3">
    <location>
        <begin position="182"/>
        <end position="327"/>
    </location>
</feature>
<feature type="active site" evidence="1">
    <location>
        <position position="107"/>
    </location>
</feature>
<feature type="binding site" evidence="1">
    <location>
        <begin position="24"/>
        <end position="27"/>
    </location>
    <ligand>
        <name>NADP(+)</name>
        <dbReference type="ChEBI" id="CHEBI:58349"/>
    </ligand>
</feature>
<feature type="binding site" evidence="1">
    <location>
        <position position="47"/>
    </location>
    <ligand>
        <name>NADP(+)</name>
        <dbReference type="ChEBI" id="CHEBI:58349"/>
    </ligand>
</feature>
<feature type="binding site" evidence="1">
    <location>
        <position position="50"/>
    </location>
    <ligand>
        <name>NADP(+)</name>
        <dbReference type="ChEBI" id="CHEBI:58349"/>
    </ligand>
</feature>
<feature type="binding site" evidence="1">
    <location>
        <position position="52"/>
    </location>
    <ligand>
        <name>NADP(+)</name>
        <dbReference type="ChEBI" id="CHEBI:58349"/>
    </ligand>
</feature>
<feature type="binding site" evidence="1">
    <location>
        <begin position="82"/>
        <end position="85"/>
    </location>
    <ligand>
        <name>NADP(+)</name>
        <dbReference type="ChEBI" id="CHEBI:58349"/>
    </ligand>
</feature>
<feature type="binding site" evidence="1">
    <location>
        <position position="133"/>
    </location>
    <ligand>
        <name>NADP(+)</name>
        <dbReference type="ChEBI" id="CHEBI:58349"/>
    </ligand>
</feature>
<feature type="binding site" evidence="1">
    <location>
        <position position="190"/>
    </location>
    <ligand>
        <name>Mg(2+)</name>
        <dbReference type="ChEBI" id="CHEBI:18420"/>
        <label>1</label>
    </ligand>
</feature>
<feature type="binding site" evidence="1">
    <location>
        <position position="190"/>
    </location>
    <ligand>
        <name>Mg(2+)</name>
        <dbReference type="ChEBI" id="CHEBI:18420"/>
        <label>2</label>
    </ligand>
</feature>
<feature type="binding site" evidence="1">
    <location>
        <position position="194"/>
    </location>
    <ligand>
        <name>Mg(2+)</name>
        <dbReference type="ChEBI" id="CHEBI:18420"/>
        <label>1</label>
    </ligand>
</feature>
<feature type="binding site" evidence="1">
    <location>
        <position position="226"/>
    </location>
    <ligand>
        <name>Mg(2+)</name>
        <dbReference type="ChEBI" id="CHEBI:18420"/>
        <label>2</label>
    </ligand>
</feature>
<feature type="binding site" evidence="1">
    <location>
        <position position="230"/>
    </location>
    <ligand>
        <name>Mg(2+)</name>
        <dbReference type="ChEBI" id="CHEBI:18420"/>
        <label>2</label>
    </ligand>
</feature>
<feature type="binding site" evidence="1">
    <location>
        <position position="251"/>
    </location>
    <ligand>
        <name>substrate</name>
    </ligand>
</feature>
<reference key="1">
    <citation type="journal article" date="2009" name="Genome Biol.">
        <title>Genomic and genetic analyses of diversity and plant interactions of Pseudomonas fluorescens.</title>
        <authorList>
            <person name="Silby M.W."/>
            <person name="Cerdeno-Tarraga A.M."/>
            <person name="Vernikos G.S."/>
            <person name="Giddens S.R."/>
            <person name="Jackson R.W."/>
            <person name="Preston G.M."/>
            <person name="Zhang X.-X."/>
            <person name="Moon C.D."/>
            <person name="Gehrig S.M."/>
            <person name="Godfrey S.A.C."/>
            <person name="Knight C.G."/>
            <person name="Malone J.G."/>
            <person name="Robinson Z."/>
            <person name="Spiers A.J."/>
            <person name="Harris S."/>
            <person name="Challis G.L."/>
            <person name="Yaxley A.M."/>
            <person name="Harris D."/>
            <person name="Seeger K."/>
            <person name="Murphy L."/>
            <person name="Rutter S."/>
            <person name="Squares R."/>
            <person name="Quail M.A."/>
            <person name="Saunders E."/>
            <person name="Mavromatis K."/>
            <person name="Brettin T.S."/>
            <person name="Bentley S.D."/>
            <person name="Hothersall J."/>
            <person name="Stephens E."/>
            <person name="Thomas C.M."/>
            <person name="Parkhill J."/>
            <person name="Levy S.B."/>
            <person name="Rainey P.B."/>
            <person name="Thomson N.R."/>
        </authorList>
    </citation>
    <scope>NUCLEOTIDE SEQUENCE [LARGE SCALE GENOMIC DNA]</scope>
    <source>
        <strain>Pf0-1</strain>
    </source>
</reference>
<name>ILVC_PSEPF</name>
<sequence length="338" mass="36236">MKVFYDKDCDLSIIQGKKVAIIGYGSQGHAQACNLKDSGVDVTVGLRKGSATVAKAEAHGLKVTDVAAAVAGADLVMILTPDEFQSQLYKNEIEPNIKKGATLAFSHGFAIHYNQVVPRADLDVIMIAPKAPGHTVRSEFVKGGGIPDLIAIYQDASGNAKNVALSYAAGVGGGRTGIIETTFKDETETDLFGEQAVLCGGTVELVKAGFETLVEAGYAPEMAYFECLHELKLIVDLMYEGGIANMNYSISNNAEYGEYVTGPEVINAESRQAMRNALKRIQDGEYAKMFISEGATGYPSMTAKRRNNAAHGIEIIGEQLRSMMPWIGANKIVDKAKN</sequence>
<evidence type="ECO:0000255" key="1">
    <source>
        <dbReference type="HAMAP-Rule" id="MF_00435"/>
    </source>
</evidence>
<evidence type="ECO:0000255" key="2">
    <source>
        <dbReference type="PROSITE-ProRule" id="PRU01197"/>
    </source>
</evidence>
<evidence type="ECO:0000255" key="3">
    <source>
        <dbReference type="PROSITE-ProRule" id="PRU01198"/>
    </source>
</evidence>
<keyword id="KW-0028">Amino-acid biosynthesis</keyword>
<keyword id="KW-0100">Branched-chain amino acid biosynthesis</keyword>
<keyword id="KW-0460">Magnesium</keyword>
<keyword id="KW-0479">Metal-binding</keyword>
<keyword id="KW-0521">NADP</keyword>
<keyword id="KW-0560">Oxidoreductase</keyword>
<dbReference type="EC" id="1.1.1.86" evidence="1"/>
<dbReference type="EMBL" id="CP000094">
    <property type="protein sequence ID" value="ABA76523.1"/>
    <property type="molecule type" value="Genomic_DNA"/>
</dbReference>
<dbReference type="RefSeq" id="WP_007959661.1">
    <property type="nucleotide sequence ID" value="NC_007492.2"/>
</dbReference>
<dbReference type="SMR" id="Q3K6T1"/>
<dbReference type="GeneID" id="93491118"/>
<dbReference type="KEGG" id="pfo:Pfl01_4786"/>
<dbReference type="eggNOG" id="COG0059">
    <property type="taxonomic scope" value="Bacteria"/>
</dbReference>
<dbReference type="HOGENOM" id="CLU_033821_0_1_6"/>
<dbReference type="UniPathway" id="UPA00047">
    <property type="reaction ID" value="UER00056"/>
</dbReference>
<dbReference type="UniPathway" id="UPA00049">
    <property type="reaction ID" value="UER00060"/>
</dbReference>
<dbReference type="Proteomes" id="UP000002704">
    <property type="component" value="Chromosome"/>
</dbReference>
<dbReference type="GO" id="GO:0005829">
    <property type="term" value="C:cytosol"/>
    <property type="evidence" value="ECO:0007669"/>
    <property type="project" value="TreeGrafter"/>
</dbReference>
<dbReference type="GO" id="GO:0004455">
    <property type="term" value="F:ketol-acid reductoisomerase activity"/>
    <property type="evidence" value="ECO:0007669"/>
    <property type="project" value="UniProtKB-UniRule"/>
</dbReference>
<dbReference type="GO" id="GO:0000287">
    <property type="term" value="F:magnesium ion binding"/>
    <property type="evidence" value="ECO:0007669"/>
    <property type="project" value="UniProtKB-UniRule"/>
</dbReference>
<dbReference type="GO" id="GO:0050661">
    <property type="term" value="F:NADP binding"/>
    <property type="evidence" value="ECO:0007669"/>
    <property type="project" value="InterPro"/>
</dbReference>
<dbReference type="GO" id="GO:0009097">
    <property type="term" value="P:isoleucine biosynthetic process"/>
    <property type="evidence" value="ECO:0007669"/>
    <property type="project" value="UniProtKB-UniRule"/>
</dbReference>
<dbReference type="GO" id="GO:0009099">
    <property type="term" value="P:L-valine biosynthetic process"/>
    <property type="evidence" value="ECO:0007669"/>
    <property type="project" value="UniProtKB-UniRule"/>
</dbReference>
<dbReference type="FunFam" id="3.40.50.720:FF:000023">
    <property type="entry name" value="Ketol-acid reductoisomerase (NADP(+))"/>
    <property type="match status" value="1"/>
</dbReference>
<dbReference type="Gene3D" id="6.10.240.10">
    <property type="match status" value="1"/>
</dbReference>
<dbReference type="Gene3D" id="3.40.50.720">
    <property type="entry name" value="NAD(P)-binding Rossmann-like Domain"/>
    <property type="match status" value="1"/>
</dbReference>
<dbReference type="HAMAP" id="MF_00435">
    <property type="entry name" value="IlvC"/>
    <property type="match status" value="1"/>
</dbReference>
<dbReference type="InterPro" id="IPR008927">
    <property type="entry name" value="6-PGluconate_DH-like_C_sf"/>
</dbReference>
<dbReference type="InterPro" id="IPR013023">
    <property type="entry name" value="KARI"/>
</dbReference>
<dbReference type="InterPro" id="IPR000506">
    <property type="entry name" value="KARI_C"/>
</dbReference>
<dbReference type="InterPro" id="IPR013116">
    <property type="entry name" value="KARI_N"/>
</dbReference>
<dbReference type="InterPro" id="IPR014359">
    <property type="entry name" value="KARI_prok"/>
</dbReference>
<dbReference type="InterPro" id="IPR036291">
    <property type="entry name" value="NAD(P)-bd_dom_sf"/>
</dbReference>
<dbReference type="NCBIfam" id="TIGR00465">
    <property type="entry name" value="ilvC"/>
    <property type="match status" value="1"/>
</dbReference>
<dbReference type="NCBIfam" id="NF004017">
    <property type="entry name" value="PRK05479.1"/>
    <property type="match status" value="1"/>
</dbReference>
<dbReference type="NCBIfam" id="NF009940">
    <property type="entry name" value="PRK13403.1"/>
    <property type="match status" value="1"/>
</dbReference>
<dbReference type="PANTHER" id="PTHR21371">
    <property type="entry name" value="KETOL-ACID REDUCTOISOMERASE, MITOCHONDRIAL"/>
    <property type="match status" value="1"/>
</dbReference>
<dbReference type="PANTHER" id="PTHR21371:SF1">
    <property type="entry name" value="KETOL-ACID REDUCTOISOMERASE, MITOCHONDRIAL"/>
    <property type="match status" value="1"/>
</dbReference>
<dbReference type="Pfam" id="PF01450">
    <property type="entry name" value="KARI_C"/>
    <property type="match status" value="1"/>
</dbReference>
<dbReference type="Pfam" id="PF07991">
    <property type="entry name" value="KARI_N"/>
    <property type="match status" value="1"/>
</dbReference>
<dbReference type="PIRSF" id="PIRSF000116">
    <property type="entry name" value="IlvC_gammaproteo"/>
    <property type="match status" value="1"/>
</dbReference>
<dbReference type="SUPFAM" id="SSF48179">
    <property type="entry name" value="6-phosphogluconate dehydrogenase C-terminal domain-like"/>
    <property type="match status" value="1"/>
</dbReference>
<dbReference type="SUPFAM" id="SSF51735">
    <property type="entry name" value="NAD(P)-binding Rossmann-fold domains"/>
    <property type="match status" value="1"/>
</dbReference>
<dbReference type="PROSITE" id="PS51851">
    <property type="entry name" value="KARI_C"/>
    <property type="match status" value="1"/>
</dbReference>
<dbReference type="PROSITE" id="PS51850">
    <property type="entry name" value="KARI_N"/>
    <property type="match status" value="1"/>
</dbReference>
<comment type="function">
    <text evidence="1">Involved in the biosynthesis of branched-chain amino acids (BCAA). Catalyzes an alkyl-migration followed by a ketol-acid reduction of (S)-2-acetolactate (S2AL) to yield (R)-2,3-dihydroxy-isovalerate. In the isomerase reaction, S2AL is rearranged via a Mg-dependent methyl migration to produce 3-hydroxy-3-methyl-2-ketobutyrate (HMKB). In the reductase reaction, this 2-ketoacid undergoes a metal-dependent reduction by NADPH to yield (R)-2,3-dihydroxy-isovalerate.</text>
</comment>
<comment type="catalytic activity">
    <reaction evidence="1">
        <text>(2R)-2,3-dihydroxy-3-methylbutanoate + NADP(+) = (2S)-2-acetolactate + NADPH + H(+)</text>
        <dbReference type="Rhea" id="RHEA:22068"/>
        <dbReference type="ChEBI" id="CHEBI:15378"/>
        <dbReference type="ChEBI" id="CHEBI:49072"/>
        <dbReference type="ChEBI" id="CHEBI:57783"/>
        <dbReference type="ChEBI" id="CHEBI:58349"/>
        <dbReference type="ChEBI" id="CHEBI:58476"/>
        <dbReference type="EC" id="1.1.1.86"/>
    </reaction>
</comment>
<comment type="catalytic activity">
    <reaction evidence="1">
        <text>(2R,3R)-2,3-dihydroxy-3-methylpentanoate + NADP(+) = (S)-2-ethyl-2-hydroxy-3-oxobutanoate + NADPH + H(+)</text>
        <dbReference type="Rhea" id="RHEA:13493"/>
        <dbReference type="ChEBI" id="CHEBI:15378"/>
        <dbReference type="ChEBI" id="CHEBI:49256"/>
        <dbReference type="ChEBI" id="CHEBI:49258"/>
        <dbReference type="ChEBI" id="CHEBI:57783"/>
        <dbReference type="ChEBI" id="CHEBI:58349"/>
        <dbReference type="EC" id="1.1.1.86"/>
    </reaction>
</comment>
<comment type="cofactor">
    <cofactor evidence="1">
        <name>Mg(2+)</name>
        <dbReference type="ChEBI" id="CHEBI:18420"/>
    </cofactor>
    <text evidence="1">Binds 2 magnesium ions per subunit.</text>
</comment>
<comment type="pathway">
    <text evidence="1">Amino-acid biosynthesis; L-isoleucine biosynthesis; L-isoleucine from 2-oxobutanoate: step 2/4.</text>
</comment>
<comment type="pathway">
    <text evidence="1">Amino-acid biosynthesis; L-valine biosynthesis; L-valine from pyruvate: step 2/4.</text>
</comment>
<comment type="similarity">
    <text evidence="1">Belongs to the ketol-acid reductoisomerase family.</text>
</comment>
<gene>
    <name evidence="1" type="primary">ilvC</name>
    <name type="ordered locus">Pfl01_4786</name>
</gene>